<accession>Q4KJK3</accession>
<reference key="1">
    <citation type="journal article" date="2005" name="Nat. Biotechnol.">
        <title>Complete genome sequence of the plant commensal Pseudomonas fluorescens Pf-5.</title>
        <authorList>
            <person name="Paulsen I.T."/>
            <person name="Press C.M."/>
            <person name="Ravel J."/>
            <person name="Kobayashi D.Y."/>
            <person name="Myers G.S.A."/>
            <person name="Mavrodi D.V."/>
            <person name="DeBoy R.T."/>
            <person name="Seshadri R."/>
            <person name="Ren Q."/>
            <person name="Madupu R."/>
            <person name="Dodson R.J."/>
            <person name="Durkin A.S."/>
            <person name="Brinkac L.M."/>
            <person name="Daugherty S.C."/>
            <person name="Sullivan S.A."/>
            <person name="Rosovitz M.J."/>
            <person name="Gwinn M.L."/>
            <person name="Zhou L."/>
            <person name="Schneider D.J."/>
            <person name="Cartinhour S.W."/>
            <person name="Nelson W.C."/>
            <person name="Weidman J."/>
            <person name="Watkins K."/>
            <person name="Tran K."/>
            <person name="Khouri H."/>
            <person name="Pierson E.A."/>
            <person name="Pierson L.S. III"/>
            <person name="Thomashow L.S."/>
            <person name="Loper J.E."/>
        </authorList>
    </citation>
    <scope>NUCLEOTIDE SEQUENCE [LARGE SCALE GENOMIC DNA]</scope>
    <source>
        <strain>ATCC BAA-477 / NRRL B-23932 / Pf-5</strain>
    </source>
</reference>
<comment type="function">
    <text evidence="1">ATPase subunit of a proteasome-like degradation complex; this subunit has chaperone activity. The binding of ATP and its subsequent hydrolysis by HslU are essential for unfolding of protein substrates subsequently hydrolyzed by HslV. HslU recognizes the N-terminal part of its protein substrates and unfolds these before they are guided to HslV for hydrolysis.</text>
</comment>
<comment type="subunit">
    <text evidence="1">A double ring-shaped homohexamer of HslV is capped on each side by a ring-shaped HslU homohexamer. The assembly of the HslU/HslV complex is dependent on binding of ATP.</text>
</comment>
<comment type="subcellular location">
    <subcellularLocation>
        <location evidence="1">Cytoplasm</location>
    </subcellularLocation>
</comment>
<comment type="similarity">
    <text evidence="1">Belongs to the ClpX chaperone family. HslU subfamily.</text>
</comment>
<protein>
    <recommendedName>
        <fullName evidence="1">ATP-dependent protease ATPase subunit HslU</fullName>
    </recommendedName>
    <alternativeName>
        <fullName evidence="1">Unfoldase HslU</fullName>
    </alternativeName>
</protein>
<gene>
    <name evidence="1" type="primary">hslU</name>
    <name type="ordered locus">PFL_0436</name>
</gene>
<name>HSLU_PSEF5</name>
<proteinExistence type="inferred from homology"/>
<feature type="chain" id="PRO_1000012774" description="ATP-dependent protease ATPase subunit HslU">
    <location>
        <begin position="1"/>
        <end position="446"/>
    </location>
</feature>
<feature type="binding site" evidence="1">
    <location>
        <position position="17"/>
    </location>
    <ligand>
        <name>ATP</name>
        <dbReference type="ChEBI" id="CHEBI:30616"/>
    </ligand>
</feature>
<feature type="binding site" evidence="1">
    <location>
        <begin position="59"/>
        <end position="64"/>
    </location>
    <ligand>
        <name>ATP</name>
        <dbReference type="ChEBI" id="CHEBI:30616"/>
    </ligand>
</feature>
<feature type="binding site" evidence="1">
    <location>
        <position position="255"/>
    </location>
    <ligand>
        <name>ATP</name>
        <dbReference type="ChEBI" id="CHEBI:30616"/>
    </ligand>
</feature>
<feature type="binding site" evidence="1">
    <location>
        <position position="320"/>
    </location>
    <ligand>
        <name>ATP</name>
        <dbReference type="ChEBI" id="CHEBI:30616"/>
    </ligand>
</feature>
<feature type="binding site" evidence="1">
    <location>
        <position position="392"/>
    </location>
    <ligand>
        <name>ATP</name>
        <dbReference type="ChEBI" id="CHEBI:30616"/>
    </ligand>
</feature>
<organism>
    <name type="scientific">Pseudomonas fluorescens (strain ATCC BAA-477 / NRRL B-23932 / Pf-5)</name>
    <dbReference type="NCBI Taxonomy" id="220664"/>
    <lineage>
        <taxon>Bacteria</taxon>
        <taxon>Pseudomonadati</taxon>
        <taxon>Pseudomonadota</taxon>
        <taxon>Gammaproteobacteria</taxon>
        <taxon>Pseudomonadales</taxon>
        <taxon>Pseudomonadaceae</taxon>
        <taxon>Pseudomonas</taxon>
    </lineage>
</organism>
<keyword id="KW-0067">ATP-binding</keyword>
<keyword id="KW-0143">Chaperone</keyword>
<keyword id="KW-0963">Cytoplasm</keyword>
<keyword id="KW-0547">Nucleotide-binding</keyword>
<keyword id="KW-0346">Stress response</keyword>
<dbReference type="EMBL" id="CP000076">
    <property type="protein sequence ID" value="AAY95845.1"/>
    <property type="molecule type" value="Genomic_DNA"/>
</dbReference>
<dbReference type="RefSeq" id="WP_011058811.1">
    <property type="nucleotide sequence ID" value="NC_004129.6"/>
</dbReference>
<dbReference type="SMR" id="Q4KJK3"/>
<dbReference type="STRING" id="220664.PFL_0436"/>
<dbReference type="GeneID" id="57473425"/>
<dbReference type="KEGG" id="pfl:PFL_0436"/>
<dbReference type="PATRIC" id="fig|220664.5.peg.445"/>
<dbReference type="eggNOG" id="COG1220">
    <property type="taxonomic scope" value="Bacteria"/>
</dbReference>
<dbReference type="HOGENOM" id="CLU_033123_0_0_6"/>
<dbReference type="Proteomes" id="UP000008540">
    <property type="component" value="Chromosome"/>
</dbReference>
<dbReference type="GO" id="GO:0009376">
    <property type="term" value="C:HslUV protease complex"/>
    <property type="evidence" value="ECO:0007669"/>
    <property type="project" value="UniProtKB-UniRule"/>
</dbReference>
<dbReference type="GO" id="GO:0005524">
    <property type="term" value="F:ATP binding"/>
    <property type="evidence" value="ECO:0007669"/>
    <property type="project" value="UniProtKB-UniRule"/>
</dbReference>
<dbReference type="GO" id="GO:0016887">
    <property type="term" value="F:ATP hydrolysis activity"/>
    <property type="evidence" value="ECO:0007669"/>
    <property type="project" value="InterPro"/>
</dbReference>
<dbReference type="GO" id="GO:0008233">
    <property type="term" value="F:peptidase activity"/>
    <property type="evidence" value="ECO:0007669"/>
    <property type="project" value="InterPro"/>
</dbReference>
<dbReference type="GO" id="GO:0036402">
    <property type="term" value="F:proteasome-activating activity"/>
    <property type="evidence" value="ECO:0007669"/>
    <property type="project" value="UniProtKB-UniRule"/>
</dbReference>
<dbReference type="GO" id="GO:0043335">
    <property type="term" value="P:protein unfolding"/>
    <property type="evidence" value="ECO:0007669"/>
    <property type="project" value="UniProtKB-UniRule"/>
</dbReference>
<dbReference type="GO" id="GO:0051603">
    <property type="term" value="P:proteolysis involved in protein catabolic process"/>
    <property type="evidence" value="ECO:0007669"/>
    <property type="project" value="TreeGrafter"/>
</dbReference>
<dbReference type="CDD" id="cd19498">
    <property type="entry name" value="RecA-like_HslU"/>
    <property type="match status" value="1"/>
</dbReference>
<dbReference type="FunFam" id="1.10.8.10:FF:000028">
    <property type="entry name" value="ATP-dependent protease ATPase subunit HslU"/>
    <property type="match status" value="1"/>
</dbReference>
<dbReference type="FunFam" id="3.40.50.300:FF:000213">
    <property type="entry name" value="ATP-dependent protease ATPase subunit HslU"/>
    <property type="match status" value="1"/>
</dbReference>
<dbReference type="FunFam" id="3.40.50.300:FF:000220">
    <property type="entry name" value="ATP-dependent protease ATPase subunit HslU"/>
    <property type="match status" value="1"/>
</dbReference>
<dbReference type="Gene3D" id="1.10.8.60">
    <property type="match status" value="1"/>
</dbReference>
<dbReference type="Gene3D" id="1.10.8.10">
    <property type="entry name" value="DNA helicase RuvA subunit, C-terminal domain"/>
    <property type="match status" value="1"/>
</dbReference>
<dbReference type="Gene3D" id="3.40.50.300">
    <property type="entry name" value="P-loop containing nucleotide triphosphate hydrolases"/>
    <property type="match status" value="2"/>
</dbReference>
<dbReference type="HAMAP" id="MF_00249">
    <property type="entry name" value="HslU"/>
    <property type="match status" value="1"/>
</dbReference>
<dbReference type="InterPro" id="IPR003593">
    <property type="entry name" value="AAA+_ATPase"/>
</dbReference>
<dbReference type="InterPro" id="IPR050052">
    <property type="entry name" value="ATP-dep_Clp_protease_ClpX"/>
</dbReference>
<dbReference type="InterPro" id="IPR003959">
    <property type="entry name" value="ATPase_AAA_core"/>
</dbReference>
<dbReference type="InterPro" id="IPR019489">
    <property type="entry name" value="Clp_ATPase_C"/>
</dbReference>
<dbReference type="InterPro" id="IPR004491">
    <property type="entry name" value="HslU"/>
</dbReference>
<dbReference type="InterPro" id="IPR027417">
    <property type="entry name" value="P-loop_NTPase"/>
</dbReference>
<dbReference type="NCBIfam" id="TIGR00390">
    <property type="entry name" value="hslU"/>
    <property type="match status" value="1"/>
</dbReference>
<dbReference type="NCBIfam" id="NF003544">
    <property type="entry name" value="PRK05201.1"/>
    <property type="match status" value="1"/>
</dbReference>
<dbReference type="PANTHER" id="PTHR48102">
    <property type="entry name" value="ATP-DEPENDENT CLP PROTEASE ATP-BINDING SUBUNIT CLPX-LIKE, MITOCHONDRIAL-RELATED"/>
    <property type="match status" value="1"/>
</dbReference>
<dbReference type="PANTHER" id="PTHR48102:SF3">
    <property type="entry name" value="ATP-DEPENDENT PROTEASE ATPASE SUBUNIT HSLU"/>
    <property type="match status" value="1"/>
</dbReference>
<dbReference type="Pfam" id="PF00004">
    <property type="entry name" value="AAA"/>
    <property type="match status" value="1"/>
</dbReference>
<dbReference type="Pfam" id="PF07724">
    <property type="entry name" value="AAA_2"/>
    <property type="match status" value="1"/>
</dbReference>
<dbReference type="SMART" id="SM00382">
    <property type="entry name" value="AAA"/>
    <property type="match status" value="1"/>
</dbReference>
<dbReference type="SMART" id="SM01086">
    <property type="entry name" value="ClpB_D2-small"/>
    <property type="match status" value="1"/>
</dbReference>
<dbReference type="SUPFAM" id="SSF52540">
    <property type="entry name" value="P-loop containing nucleoside triphosphate hydrolases"/>
    <property type="match status" value="1"/>
</dbReference>
<sequence length="446" mass="50046">MSMTPREIVHELNRHIIGQDDAKRAVAIALRNRWRRMQLPAELRVEVTPKNILMIGPTGVGKTEIARRLAKLANAPFIKVEATKFTEVGYVGRDVESIIRDLADAAIKMFREQEMIRVRHRAEDAAEERILDALLPQARTGFNSDDAAPAQDSNTRQLFRKRLREGQLDDKEIEIEVAEAAGVDISAPPGMEEMTNQLQSLFANMGKGKRKNRKLKVKEALKLVRDEEASRLVNDEELKAKALEAVEQHGIVFIDEIDKVAKRGNAGGVDVSREGVQRDLLPLIEGCTVNTKLGMVKTDHILFIASGAFHLSKPSDLVPELQGRLPIRVELKALSPQDFERILSEPHASLTEQYRELLKTEGLNIEFLPEGIKRLAEIAWQVNEKTENIGARRLHTLLERLLEEVSFSAGDLASAHSEEPIRIDAAYVNSHLGELAQNEDLSRYIL</sequence>
<evidence type="ECO:0000255" key="1">
    <source>
        <dbReference type="HAMAP-Rule" id="MF_00249"/>
    </source>
</evidence>